<sequence length="424" mass="48212">MAIKINEKGRGKFKPAPTYEKEEVRQLLMEKINEEMEAVATATSDISNDEIQYKSDKFNVLSLFCGAGGLDLGFELAGLEQSLGTDKALEAFKDRDVYNAIRHESVFHTVYANDIFSEALQTYEKNMPNHVFIHEKDIRKIKEFPSANLVIGGFPCPGFSEAGPRLVDDERNFLYIHFIRCLMQVQPEIFVAENVKGMMTLGGGEVFRQIVEDFGAAGYRVEARLLNARDYGVPQIRERVIIVGVRNDIDFNYEYPEITHGNEEGLKPYVTLEEAIGDLSLDPGPYFTGSYSTIFMSRNRKKKWTDQSFTIQASGRQAPIHPGGLPMEKVDKNKWIFPDGEENHRRLSVKEIKRIQTFPDWYEFSDGGNMKVSVNNRLDKQYKQIGNAVPVFLARAVAKSIAQFAADYLKDNHPHEAPQMKLFI</sequence>
<evidence type="ECO:0000255" key="1">
    <source>
        <dbReference type="PROSITE-ProRule" id="PRU01016"/>
    </source>
</evidence>
<evidence type="ECO:0000255" key="2">
    <source>
        <dbReference type="PROSITE-ProRule" id="PRU10018"/>
    </source>
</evidence>
<evidence type="ECO:0000269" key="3">
    <source>
    </source>
</evidence>
<evidence type="ECO:0000269" key="4">
    <source>
    </source>
</evidence>
<evidence type="ECO:0000303" key="5">
    <source>
    </source>
</evidence>
<evidence type="ECO:0000303" key="6">
    <source>
    </source>
</evidence>
<evidence type="ECO:0000305" key="7">
    <source>
    </source>
</evidence>
<keyword id="KW-0903">Direct protein sequencing</keyword>
<keyword id="KW-0238">DNA-binding</keyword>
<keyword id="KW-0488">Methylation</keyword>
<keyword id="KW-0489">Methyltransferase</keyword>
<keyword id="KW-0680">Restriction system</keyword>
<keyword id="KW-0949">S-adenosyl-L-methionine</keyword>
<keyword id="KW-0808">Transferase</keyword>
<dbReference type="EC" id="2.1.1.37"/>
<dbReference type="EMBL" id="X15758">
    <property type="protein sequence ID" value="CAA33764.2"/>
    <property type="molecule type" value="Genomic_DNA"/>
</dbReference>
<dbReference type="PIR" id="S07792">
    <property type="entry name" value="S07792"/>
</dbReference>
<dbReference type="SMR" id="P13906"/>
<dbReference type="iPTMnet" id="P13906"/>
<dbReference type="PRO" id="PR:P13906"/>
<dbReference type="GO" id="GO:0003886">
    <property type="term" value="F:DNA (cytosine-5-)-methyltransferase activity"/>
    <property type="evidence" value="ECO:0007669"/>
    <property type="project" value="UniProtKB-EC"/>
</dbReference>
<dbReference type="GO" id="GO:0003677">
    <property type="term" value="F:DNA binding"/>
    <property type="evidence" value="ECO:0007669"/>
    <property type="project" value="UniProtKB-KW"/>
</dbReference>
<dbReference type="GO" id="GO:0009307">
    <property type="term" value="P:DNA restriction-modification system"/>
    <property type="evidence" value="ECO:0007669"/>
    <property type="project" value="UniProtKB-KW"/>
</dbReference>
<dbReference type="GO" id="GO:0032259">
    <property type="term" value="P:methylation"/>
    <property type="evidence" value="ECO:0007669"/>
    <property type="project" value="UniProtKB-KW"/>
</dbReference>
<dbReference type="GO" id="GO:0044027">
    <property type="term" value="P:negative regulation of gene expression via chromosomal CpG island methylation"/>
    <property type="evidence" value="ECO:0007669"/>
    <property type="project" value="TreeGrafter"/>
</dbReference>
<dbReference type="CDD" id="cd00315">
    <property type="entry name" value="Cyt_C5_DNA_methylase"/>
    <property type="match status" value="1"/>
</dbReference>
<dbReference type="Gene3D" id="3.90.120.10">
    <property type="entry name" value="DNA Methylase, subunit A, domain 2"/>
    <property type="match status" value="1"/>
</dbReference>
<dbReference type="Gene3D" id="3.40.50.150">
    <property type="entry name" value="Vaccinia Virus protein VP39"/>
    <property type="match status" value="1"/>
</dbReference>
<dbReference type="InterPro" id="IPR050390">
    <property type="entry name" value="C5-Methyltransferase"/>
</dbReference>
<dbReference type="InterPro" id="IPR018117">
    <property type="entry name" value="C5_DNA_meth_AS"/>
</dbReference>
<dbReference type="InterPro" id="IPR001525">
    <property type="entry name" value="C5_MeTfrase"/>
</dbReference>
<dbReference type="InterPro" id="IPR031303">
    <property type="entry name" value="C5_meth_CS"/>
</dbReference>
<dbReference type="InterPro" id="IPR029063">
    <property type="entry name" value="SAM-dependent_MTases_sf"/>
</dbReference>
<dbReference type="NCBIfam" id="TIGR00675">
    <property type="entry name" value="dcm"/>
    <property type="match status" value="1"/>
</dbReference>
<dbReference type="PANTHER" id="PTHR10629">
    <property type="entry name" value="CYTOSINE-SPECIFIC METHYLTRANSFERASE"/>
    <property type="match status" value="1"/>
</dbReference>
<dbReference type="PANTHER" id="PTHR10629:SF52">
    <property type="entry name" value="DNA (CYTOSINE-5)-METHYLTRANSFERASE 1"/>
    <property type="match status" value="1"/>
</dbReference>
<dbReference type="Pfam" id="PF00145">
    <property type="entry name" value="DNA_methylase"/>
    <property type="match status" value="1"/>
</dbReference>
<dbReference type="PRINTS" id="PR00105">
    <property type="entry name" value="C5METTRFRASE"/>
</dbReference>
<dbReference type="SUPFAM" id="SSF53335">
    <property type="entry name" value="S-adenosyl-L-methionine-dependent methyltransferases"/>
    <property type="match status" value="1"/>
</dbReference>
<dbReference type="PROSITE" id="PS00094">
    <property type="entry name" value="C5_MTASE_1"/>
    <property type="match status" value="1"/>
</dbReference>
<dbReference type="PROSITE" id="PS00095">
    <property type="entry name" value="C5_MTASE_2"/>
    <property type="match status" value="1"/>
</dbReference>
<dbReference type="PROSITE" id="PS51679">
    <property type="entry name" value="SAM_MT_C5"/>
    <property type="match status" value="1"/>
</dbReference>
<organism>
    <name type="scientific">Lysinibacillus sphaericus</name>
    <name type="common">Bacillus sphaericus</name>
    <dbReference type="NCBI Taxonomy" id="1421"/>
    <lineage>
        <taxon>Bacteria</taxon>
        <taxon>Bacillati</taxon>
        <taxon>Bacillota</taxon>
        <taxon>Bacilli</taxon>
        <taxon>Bacillales</taxon>
        <taxon>Bacillaceae</taxon>
        <taxon>Lysinibacillus</taxon>
    </lineage>
</organism>
<reference key="1">
    <citation type="journal article" date="1983" name="J. Mol. Biol.">
        <title>Structure of the Bacillus sphaericus R modification methylase gene.</title>
        <authorList>
            <person name="Posfai G."/>
            <person name="Kiss A."/>
            <person name="Erdei S."/>
            <person name="Posfai J."/>
            <person name="Venetianer P."/>
        </authorList>
    </citation>
    <scope>NUCLEOTIDE SEQUENCE [GENOMIC DNA]</scope>
    <scope>FUNCTION</scope>
    <scope>SUBUNIT</scope>
    <source>
        <strain>R</strain>
    </source>
</reference>
<reference key="2">
    <citation type="journal article" date="1994" name="Nucleic Acids Res.">
        <title>Self-methylation of BspRI DNA-methyltransferase.</title>
        <authorList>
            <person name="Szilak L."/>
            <person name="Finta C."/>
            <person name="Patthy A."/>
            <person name="Venetianer P."/>
            <person name="Kiss A."/>
        </authorList>
    </citation>
    <scope>SEQUENCE REVISION TO 322</scope>
    <scope>PARTIAL PROTEIN SEQUENCE</scope>
    <scope>METHYLATION AT CYS-181</scope>
    <scope>COVALENT METHYLCYSTEINYL INTERMEDIATE</scope>
    <scope>ACTIVE SITE</scope>
</reference>
<reference key="3">
    <citation type="submission" date="2009-09" db="EMBL/GenBank/DDBJ databases">
        <authorList>
            <person name="Rasko T."/>
            <person name="Der A."/>
            <person name="Klement E."/>
            <person name="Posfai E."/>
            <person name="Medzihradszky K.F."/>
            <person name="Marshak D.R."/>
            <person name="Roberts R.J."/>
            <person name="Kiss A."/>
        </authorList>
    </citation>
    <scope>SEQUENCE REVISION TO 394</scope>
</reference>
<reference key="4">
    <citation type="journal article" date="2003" name="Nucleic Acids Res.">
        <title>A nomenclature for restriction enzymes, DNA methyltransferases, homing endonucleases and their genes.</title>
        <authorList>
            <person name="Roberts R.J."/>
            <person name="Belfort M."/>
            <person name="Bestor T."/>
            <person name="Bhagwat A.S."/>
            <person name="Bickle T.A."/>
            <person name="Bitinaite J."/>
            <person name="Blumenthal R.M."/>
            <person name="Degtyarev S.K."/>
            <person name="Dryden D.T."/>
            <person name="Dybvig K."/>
            <person name="Firman K."/>
            <person name="Gromova E.S."/>
            <person name="Gumport R.I."/>
            <person name="Halford S.E."/>
            <person name="Hattman S."/>
            <person name="Heitman J."/>
            <person name="Hornby D.P."/>
            <person name="Janulaitis A."/>
            <person name="Jeltsch A."/>
            <person name="Josephsen J."/>
            <person name="Kiss A."/>
            <person name="Klaenhammer T.R."/>
            <person name="Kobayashi I."/>
            <person name="Kong H."/>
            <person name="Krueger D.H."/>
            <person name="Lacks S."/>
            <person name="Marinus M.G."/>
            <person name="Miyahara M."/>
            <person name="Morgan R.D."/>
            <person name="Murray N.E."/>
            <person name="Nagaraja V."/>
            <person name="Piekarowicz A."/>
            <person name="Pingoud A."/>
            <person name="Raleigh E."/>
            <person name="Rao D.N."/>
            <person name="Reich N."/>
            <person name="Repin V.E."/>
            <person name="Selker E.U."/>
            <person name="Shaw P.C."/>
            <person name="Stein D.C."/>
            <person name="Stoddard B.L."/>
            <person name="Szybalski W."/>
            <person name="Trautner T.A."/>
            <person name="Van Etten J.L."/>
            <person name="Vitor J.M."/>
            <person name="Wilson G.G."/>
            <person name="Xu S.Y."/>
        </authorList>
    </citation>
    <scope>NOMENCLATURE</scope>
</reference>
<protein>
    <recommendedName>
        <fullName evidence="5">Type II methyltransferase M.BspRI</fullName>
        <shortName evidence="6">M.BspRI</shortName>
        <ecNumber>2.1.1.37</ecNumber>
    </recommendedName>
    <alternativeName>
        <fullName>Cytosine-specific methyltransferase BspRI</fullName>
    </alternativeName>
    <alternativeName>
        <fullName>Modification methylase BspRI</fullName>
    </alternativeName>
</protein>
<comment type="function">
    <text evidence="3 5">A methylase, recognizes the double-stranded sequence 5'-GGCC-3', methylates C-3 on both strands, and protects the DNA from cleavage by the BspRI endonuclease.</text>
</comment>
<comment type="catalytic activity">
    <reaction evidence="2">
        <text>a 2'-deoxycytidine in DNA + S-adenosyl-L-methionine = a 5-methyl-2'-deoxycytidine in DNA + S-adenosyl-L-homocysteine + H(+)</text>
        <dbReference type="Rhea" id="RHEA:13681"/>
        <dbReference type="Rhea" id="RHEA-COMP:11369"/>
        <dbReference type="Rhea" id="RHEA-COMP:11370"/>
        <dbReference type="ChEBI" id="CHEBI:15378"/>
        <dbReference type="ChEBI" id="CHEBI:57856"/>
        <dbReference type="ChEBI" id="CHEBI:59789"/>
        <dbReference type="ChEBI" id="CHEBI:85452"/>
        <dbReference type="ChEBI" id="CHEBI:85454"/>
        <dbReference type="EC" id="2.1.1.37"/>
    </reaction>
</comment>
<comment type="subunit">
    <text evidence="7">Monomer.</text>
</comment>
<comment type="PTM">
    <text evidence="4">In the absence of DNA, can self-methylate two cysteine residues.</text>
</comment>
<comment type="similarity">
    <text evidence="1">Belongs to the class I-like SAM-binding methyltransferase superfamily. C5-methyltransferase family.</text>
</comment>
<gene>
    <name type="primary">bspRIM</name>
</gene>
<feature type="chain" id="PRO_0000087862" description="Type II methyltransferase M.BspRI">
    <location>
        <begin position="1"/>
        <end position="424"/>
    </location>
</feature>
<feature type="domain" description="SAM-dependent MTase C5-type" evidence="1">
    <location>
        <begin position="58"/>
        <end position="408"/>
    </location>
</feature>
<feature type="active site" description="S-methylcysteine intermediate" evidence="4">
    <location>
        <position position="156"/>
    </location>
</feature>
<feature type="modified residue" description="S-methylcysteine; by autocatalysis" evidence="4">
    <location>
        <position position="181"/>
    </location>
</feature>
<name>MTB1_LYSSH</name>
<accession>P13906</accession>
<proteinExistence type="evidence at protein level"/>